<evidence type="ECO:0000255" key="1">
    <source>
        <dbReference type="HAMAP-Rule" id="MF_00537"/>
    </source>
</evidence>
<evidence type="ECO:0000305" key="2"/>
<proteinExistence type="inferred from homology"/>
<protein>
    <recommendedName>
        <fullName evidence="1">Small ribosomal subunit protein uS14</fullName>
    </recommendedName>
    <alternativeName>
        <fullName evidence="2">30S ribosomal protein S14</fullName>
    </alternativeName>
</protein>
<dbReference type="EMBL" id="FM200053">
    <property type="protein sequence ID" value="CAR61323.1"/>
    <property type="molecule type" value="Genomic_DNA"/>
</dbReference>
<dbReference type="RefSeq" id="WP_001118928.1">
    <property type="nucleotide sequence ID" value="NC_011147.1"/>
</dbReference>
<dbReference type="SMR" id="B5BGX3"/>
<dbReference type="KEGG" id="sek:SSPA3072"/>
<dbReference type="HOGENOM" id="CLU_139869_0_1_6"/>
<dbReference type="Proteomes" id="UP000001869">
    <property type="component" value="Chromosome"/>
</dbReference>
<dbReference type="GO" id="GO:0005737">
    <property type="term" value="C:cytoplasm"/>
    <property type="evidence" value="ECO:0007669"/>
    <property type="project" value="UniProtKB-ARBA"/>
</dbReference>
<dbReference type="GO" id="GO:0015935">
    <property type="term" value="C:small ribosomal subunit"/>
    <property type="evidence" value="ECO:0007669"/>
    <property type="project" value="TreeGrafter"/>
</dbReference>
<dbReference type="GO" id="GO:0019843">
    <property type="term" value="F:rRNA binding"/>
    <property type="evidence" value="ECO:0007669"/>
    <property type="project" value="UniProtKB-UniRule"/>
</dbReference>
<dbReference type="GO" id="GO:0003735">
    <property type="term" value="F:structural constituent of ribosome"/>
    <property type="evidence" value="ECO:0007669"/>
    <property type="project" value="InterPro"/>
</dbReference>
<dbReference type="GO" id="GO:0006412">
    <property type="term" value="P:translation"/>
    <property type="evidence" value="ECO:0007669"/>
    <property type="project" value="UniProtKB-UniRule"/>
</dbReference>
<dbReference type="FunFam" id="1.10.287.1480:FF:000001">
    <property type="entry name" value="30S ribosomal protein S14"/>
    <property type="match status" value="1"/>
</dbReference>
<dbReference type="Gene3D" id="1.10.287.1480">
    <property type="match status" value="1"/>
</dbReference>
<dbReference type="HAMAP" id="MF_00537">
    <property type="entry name" value="Ribosomal_uS14_1"/>
    <property type="match status" value="1"/>
</dbReference>
<dbReference type="InterPro" id="IPR001209">
    <property type="entry name" value="Ribosomal_uS14"/>
</dbReference>
<dbReference type="InterPro" id="IPR023036">
    <property type="entry name" value="Ribosomal_uS14_bac/plastid"/>
</dbReference>
<dbReference type="InterPro" id="IPR018271">
    <property type="entry name" value="Ribosomal_uS14_CS"/>
</dbReference>
<dbReference type="NCBIfam" id="NF006477">
    <property type="entry name" value="PRK08881.1"/>
    <property type="match status" value="1"/>
</dbReference>
<dbReference type="PANTHER" id="PTHR19836">
    <property type="entry name" value="30S RIBOSOMAL PROTEIN S14"/>
    <property type="match status" value="1"/>
</dbReference>
<dbReference type="PANTHER" id="PTHR19836:SF19">
    <property type="entry name" value="SMALL RIBOSOMAL SUBUNIT PROTEIN US14M"/>
    <property type="match status" value="1"/>
</dbReference>
<dbReference type="Pfam" id="PF00253">
    <property type="entry name" value="Ribosomal_S14"/>
    <property type="match status" value="1"/>
</dbReference>
<dbReference type="SUPFAM" id="SSF57716">
    <property type="entry name" value="Glucocorticoid receptor-like (DNA-binding domain)"/>
    <property type="match status" value="1"/>
</dbReference>
<dbReference type="PROSITE" id="PS00527">
    <property type="entry name" value="RIBOSOMAL_S14"/>
    <property type="match status" value="1"/>
</dbReference>
<accession>B5BGX3</accession>
<reference key="1">
    <citation type="journal article" date="2009" name="BMC Genomics">
        <title>Pseudogene accumulation in the evolutionary histories of Salmonella enterica serovars Paratyphi A and Typhi.</title>
        <authorList>
            <person name="Holt K.E."/>
            <person name="Thomson N.R."/>
            <person name="Wain J."/>
            <person name="Langridge G.C."/>
            <person name="Hasan R."/>
            <person name="Bhutta Z.A."/>
            <person name="Quail M.A."/>
            <person name="Norbertczak H."/>
            <person name="Walker D."/>
            <person name="Simmonds M."/>
            <person name="White B."/>
            <person name="Bason N."/>
            <person name="Mungall K."/>
            <person name="Dougan G."/>
            <person name="Parkhill J."/>
        </authorList>
    </citation>
    <scope>NUCLEOTIDE SEQUENCE [LARGE SCALE GENOMIC DNA]</scope>
    <source>
        <strain>AKU_12601</strain>
    </source>
</reference>
<comment type="function">
    <text evidence="1">Binds 16S rRNA, required for the assembly of 30S particles and may also be responsible for determining the conformation of the 16S rRNA at the A site.</text>
</comment>
<comment type="subunit">
    <text evidence="1">Part of the 30S ribosomal subunit. Contacts proteins S3 and S10.</text>
</comment>
<comment type="similarity">
    <text evidence="1">Belongs to the universal ribosomal protein uS14 family.</text>
</comment>
<organism>
    <name type="scientific">Salmonella paratyphi A (strain AKU_12601)</name>
    <dbReference type="NCBI Taxonomy" id="554290"/>
    <lineage>
        <taxon>Bacteria</taxon>
        <taxon>Pseudomonadati</taxon>
        <taxon>Pseudomonadota</taxon>
        <taxon>Gammaproteobacteria</taxon>
        <taxon>Enterobacterales</taxon>
        <taxon>Enterobacteriaceae</taxon>
        <taxon>Salmonella</taxon>
    </lineage>
</organism>
<sequence>MAKQSMKAREVKRVALADKYFAKRAELKAIISDVDATDEDRWNAVLKLQTLPRDSSPSRQRNRCRQTGRPHAFLRKFGLSRIKVREAAMRGEIPGLKKASW</sequence>
<gene>
    <name evidence="1" type="primary">rpsN</name>
    <name type="ordered locus">SSPA3072</name>
</gene>
<name>RS14_SALPK</name>
<keyword id="KW-0687">Ribonucleoprotein</keyword>
<keyword id="KW-0689">Ribosomal protein</keyword>
<keyword id="KW-0694">RNA-binding</keyword>
<keyword id="KW-0699">rRNA-binding</keyword>
<feature type="chain" id="PRO_1000128564" description="Small ribosomal subunit protein uS14">
    <location>
        <begin position="1"/>
        <end position="101"/>
    </location>
</feature>